<accession>Q6G903</accession>
<keyword id="KW-0418">Kinase</keyword>
<keyword id="KW-0547">Nucleotide-binding</keyword>
<keyword id="KW-0723">Serine/threonine-protein kinase</keyword>
<keyword id="KW-0808">Transferase</keyword>
<dbReference type="EC" id="2.7.11.32" evidence="1"/>
<dbReference type="EC" id="2.7.4.27" evidence="1"/>
<dbReference type="EMBL" id="BX571857">
    <property type="protein sequence ID" value="CAG43302.1"/>
    <property type="molecule type" value="Genomic_DNA"/>
</dbReference>
<dbReference type="RefSeq" id="WP_000411298.1">
    <property type="nucleotide sequence ID" value="NC_002953.3"/>
</dbReference>
<dbReference type="SMR" id="Q6G903"/>
<dbReference type="KEGG" id="sas:SAS1501"/>
<dbReference type="HOGENOM" id="CLU_046206_2_1_9"/>
<dbReference type="GO" id="GO:0043531">
    <property type="term" value="F:ADP binding"/>
    <property type="evidence" value="ECO:0007669"/>
    <property type="project" value="UniProtKB-UniRule"/>
</dbReference>
<dbReference type="GO" id="GO:0005524">
    <property type="term" value="F:ATP binding"/>
    <property type="evidence" value="ECO:0007669"/>
    <property type="project" value="InterPro"/>
</dbReference>
<dbReference type="GO" id="GO:0016776">
    <property type="term" value="F:phosphotransferase activity, phosphate group as acceptor"/>
    <property type="evidence" value="ECO:0007669"/>
    <property type="project" value="UniProtKB-UniRule"/>
</dbReference>
<dbReference type="GO" id="GO:0004674">
    <property type="term" value="F:protein serine/threonine kinase activity"/>
    <property type="evidence" value="ECO:0007669"/>
    <property type="project" value="UniProtKB-UniRule"/>
</dbReference>
<dbReference type="HAMAP" id="MF_00921">
    <property type="entry name" value="PDRP"/>
    <property type="match status" value="1"/>
</dbReference>
<dbReference type="InterPro" id="IPR005177">
    <property type="entry name" value="Kinase-pyrophosphorylase"/>
</dbReference>
<dbReference type="InterPro" id="IPR026565">
    <property type="entry name" value="PPDK_reg"/>
</dbReference>
<dbReference type="NCBIfam" id="NF003742">
    <property type="entry name" value="PRK05339.1"/>
    <property type="match status" value="1"/>
</dbReference>
<dbReference type="PANTHER" id="PTHR31756">
    <property type="entry name" value="PYRUVATE, PHOSPHATE DIKINASE REGULATORY PROTEIN 1, CHLOROPLASTIC"/>
    <property type="match status" value="1"/>
</dbReference>
<dbReference type="PANTHER" id="PTHR31756:SF3">
    <property type="entry name" value="PYRUVATE, PHOSPHATE DIKINASE REGULATORY PROTEIN 1, CHLOROPLASTIC"/>
    <property type="match status" value="1"/>
</dbReference>
<dbReference type="Pfam" id="PF03618">
    <property type="entry name" value="Kinase-PPPase"/>
    <property type="match status" value="1"/>
</dbReference>
<protein>
    <recommendedName>
        <fullName evidence="1">Putative pyruvate, phosphate dikinase regulatory protein</fullName>
        <shortName evidence="1">PPDK regulatory protein</shortName>
        <ecNumber evidence="1">2.7.11.32</ecNumber>
        <ecNumber evidence="1">2.7.4.27</ecNumber>
    </recommendedName>
</protein>
<reference key="1">
    <citation type="journal article" date="2004" name="Proc. Natl. Acad. Sci. U.S.A.">
        <title>Complete genomes of two clinical Staphylococcus aureus strains: evidence for the rapid evolution of virulence and drug resistance.</title>
        <authorList>
            <person name="Holden M.T.G."/>
            <person name="Feil E.J."/>
            <person name="Lindsay J.A."/>
            <person name="Peacock S.J."/>
            <person name="Day N.P.J."/>
            <person name="Enright M.C."/>
            <person name="Foster T.J."/>
            <person name="Moore C.E."/>
            <person name="Hurst L."/>
            <person name="Atkin R."/>
            <person name="Barron A."/>
            <person name="Bason N."/>
            <person name="Bentley S.D."/>
            <person name="Chillingworth C."/>
            <person name="Chillingworth T."/>
            <person name="Churcher C."/>
            <person name="Clark L."/>
            <person name="Corton C."/>
            <person name="Cronin A."/>
            <person name="Doggett J."/>
            <person name="Dowd L."/>
            <person name="Feltwell T."/>
            <person name="Hance Z."/>
            <person name="Harris B."/>
            <person name="Hauser H."/>
            <person name="Holroyd S."/>
            <person name="Jagels K."/>
            <person name="James K.D."/>
            <person name="Lennard N."/>
            <person name="Line A."/>
            <person name="Mayes R."/>
            <person name="Moule S."/>
            <person name="Mungall K."/>
            <person name="Ormond D."/>
            <person name="Quail M.A."/>
            <person name="Rabbinowitsch E."/>
            <person name="Rutherford K.M."/>
            <person name="Sanders M."/>
            <person name="Sharp S."/>
            <person name="Simmonds M."/>
            <person name="Stevens K."/>
            <person name="Whitehead S."/>
            <person name="Barrell B.G."/>
            <person name="Spratt B.G."/>
            <person name="Parkhill J."/>
        </authorList>
    </citation>
    <scope>NUCLEOTIDE SEQUENCE [LARGE SCALE GENOMIC DNA]</scope>
    <source>
        <strain>MSSA476</strain>
    </source>
</reference>
<proteinExistence type="inferred from homology"/>
<comment type="function">
    <text evidence="1">Bifunctional serine/threonine kinase and phosphorylase involved in the regulation of the pyruvate, phosphate dikinase (PPDK) by catalyzing its phosphorylation/dephosphorylation.</text>
</comment>
<comment type="catalytic activity">
    <reaction evidence="1">
        <text>N(tele)-phospho-L-histidyl/L-threonyl-[pyruvate, phosphate dikinase] + ADP = N(tele)-phospho-L-histidyl/O-phospho-L-threonyl-[pyruvate, phosphate dikinase] + AMP + H(+)</text>
        <dbReference type="Rhea" id="RHEA:43692"/>
        <dbReference type="Rhea" id="RHEA-COMP:10650"/>
        <dbReference type="Rhea" id="RHEA-COMP:10651"/>
        <dbReference type="ChEBI" id="CHEBI:15378"/>
        <dbReference type="ChEBI" id="CHEBI:30013"/>
        <dbReference type="ChEBI" id="CHEBI:61977"/>
        <dbReference type="ChEBI" id="CHEBI:83586"/>
        <dbReference type="ChEBI" id="CHEBI:456215"/>
        <dbReference type="ChEBI" id="CHEBI:456216"/>
        <dbReference type="EC" id="2.7.11.32"/>
    </reaction>
</comment>
<comment type="catalytic activity">
    <reaction evidence="1">
        <text>N(tele)-phospho-L-histidyl/O-phospho-L-threonyl-[pyruvate, phosphate dikinase] + phosphate + H(+) = N(tele)-phospho-L-histidyl/L-threonyl-[pyruvate, phosphate dikinase] + diphosphate</text>
        <dbReference type="Rhea" id="RHEA:43696"/>
        <dbReference type="Rhea" id="RHEA-COMP:10650"/>
        <dbReference type="Rhea" id="RHEA-COMP:10651"/>
        <dbReference type="ChEBI" id="CHEBI:15378"/>
        <dbReference type="ChEBI" id="CHEBI:30013"/>
        <dbReference type="ChEBI" id="CHEBI:33019"/>
        <dbReference type="ChEBI" id="CHEBI:43474"/>
        <dbReference type="ChEBI" id="CHEBI:61977"/>
        <dbReference type="ChEBI" id="CHEBI:83586"/>
        <dbReference type="EC" id="2.7.4.27"/>
    </reaction>
</comment>
<comment type="similarity">
    <text evidence="1">Belongs to the pyruvate, phosphate/water dikinase regulatory protein family. PDRP subfamily.</text>
</comment>
<gene>
    <name type="ordered locus">SAS1501</name>
</gene>
<organism>
    <name type="scientific">Staphylococcus aureus (strain MSSA476)</name>
    <dbReference type="NCBI Taxonomy" id="282459"/>
    <lineage>
        <taxon>Bacteria</taxon>
        <taxon>Bacillati</taxon>
        <taxon>Bacillota</taxon>
        <taxon>Bacilli</taxon>
        <taxon>Bacillales</taxon>
        <taxon>Staphylococcaceae</taxon>
        <taxon>Staphylococcus</taxon>
    </lineage>
</organism>
<sequence>MEKIKIIVASDSIGETAELVARAGISQFNPKQCKNELLRYPYIESFEDVDEVIQVAKDTNAIIVYTLIKPEMKQYMSEKVAEFQLKSVDIMGPLMDLLSASVEEKPYNEPGIVHRLDDAYFKKIDAIEFAVKYDDGKDPKGLPKADIVLLGISRTSKTPLSQYLAHKSYKVMNVPIVPEVTPPDGLYDIDPKKCIALKISEEKLNRIRKERLKQLGLGDTARYATEARIQEELNYFEEIVSEIGCPVIDVSQKAIEETANDIIHYIEQNKSK</sequence>
<name>PDRP_STAAS</name>
<evidence type="ECO:0000255" key="1">
    <source>
        <dbReference type="HAMAP-Rule" id="MF_00921"/>
    </source>
</evidence>
<feature type="chain" id="PRO_0000196717" description="Putative pyruvate, phosphate dikinase regulatory protein">
    <location>
        <begin position="1"/>
        <end position="272"/>
    </location>
</feature>
<feature type="binding site" evidence="1">
    <location>
        <begin position="151"/>
        <end position="158"/>
    </location>
    <ligand>
        <name>ADP</name>
        <dbReference type="ChEBI" id="CHEBI:456216"/>
    </ligand>
</feature>